<name>DALMA_DROME</name>
<evidence type="ECO:0000256" key="1">
    <source>
        <dbReference type="SAM" id="MobiDB-lite"/>
    </source>
</evidence>
<evidence type="ECO:0000269" key="2">
    <source>
    </source>
</evidence>
<evidence type="ECO:0000269" key="3">
    <source>
    </source>
</evidence>
<evidence type="ECO:0000269" key="4">
    <source>
    </source>
</evidence>
<evidence type="ECO:0000305" key="5"/>
<gene>
    <name type="primary">dmt</name>
    <name type="ORF">CG8374</name>
</gene>
<comment type="function">
    <text evidence="2 4">Regulator of sister chromatid cohesion in mitosis. Probably involved in development of the central nervous system.</text>
</comment>
<comment type="subcellular location">
    <subcellularLocation>
        <location evidence="5">Nucleus</location>
    </subcellularLocation>
    <subcellularLocation>
        <location evidence="5">Chromosome</location>
    </subcellularLocation>
</comment>
<comment type="developmental stage">
    <text evidence="2">Expressed in numerous tissues including the CNS throughout most of embryogenesis.</text>
</comment>
<feature type="chain" id="PRO_0000403976" description="Protein dalmatian">
    <location>
        <begin position="1"/>
        <end position="857"/>
    </location>
</feature>
<feature type="region of interest" description="Disordered" evidence="1">
    <location>
        <begin position="1"/>
        <end position="50"/>
    </location>
</feature>
<feature type="region of interest" description="Disordered" evidence="1">
    <location>
        <begin position="146"/>
        <end position="194"/>
    </location>
</feature>
<feature type="region of interest" description="Disordered" evidence="1">
    <location>
        <begin position="251"/>
        <end position="281"/>
    </location>
</feature>
<feature type="region of interest" description="Disordered" evidence="1">
    <location>
        <begin position="470"/>
        <end position="514"/>
    </location>
</feature>
<feature type="region of interest" description="Disordered" evidence="1">
    <location>
        <begin position="737"/>
        <end position="830"/>
    </location>
</feature>
<feature type="compositionally biased region" description="Polar residues" evidence="1">
    <location>
        <begin position="146"/>
        <end position="156"/>
    </location>
</feature>
<feature type="compositionally biased region" description="Polar residues" evidence="1">
    <location>
        <begin position="165"/>
        <end position="176"/>
    </location>
</feature>
<feature type="compositionally biased region" description="Basic residues" evidence="1">
    <location>
        <begin position="251"/>
        <end position="271"/>
    </location>
</feature>
<feature type="compositionally biased region" description="Basic and acidic residues" evidence="1">
    <location>
        <begin position="771"/>
        <end position="781"/>
    </location>
</feature>
<feature type="compositionally biased region" description="Acidic residues" evidence="1">
    <location>
        <begin position="797"/>
        <end position="806"/>
    </location>
</feature>
<feature type="compositionally biased region" description="Basic and acidic residues" evidence="1">
    <location>
        <begin position="807"/>
        <end position="816"/>
    </location>
</feature>
<feature type="compositionally biased region" description="Basic residues" evidence="1">
    <location>
        <begin position="817"/>
        <end position="826"/>
    </location>
</feature>
<feature type="modified residue" description="Phosphoserine" evidence="3">
    <location>
        <position position="173"/>
    </location>
</feature>
<feature type="modified residue" description="Phosphoserine" evidence="3">
    <location>
        <position position="175"/>
    </location>
</feature>
<feature type="modified residue" description="Phosphoserine" evidence="3">
    <location>
        <position position="184"/>
    </location>
</feature>
<feature type="modified residue" description="Phosphoserine" evidence="3">
    <location>
        <position position="222"/>
    </location>
</feature>
<feature type="modified residue" description="Phosphoserine" evidence="3">
    <location>
        <position position="405"/>
    </location>
</feature>
<feature type="sequence conflict" description="In Ref. 1; AAF18985." evidence="5" ref="1">
    <original>A</original>
    <variation>T</variation>
    <location>
        <position position="746"/>
    </location>
</feature>
<accession>Q9VH89</accession>
<accession>Q9U449</accession>
<keyword id="KW-0131">Cell cycle</keyword>
<keyword id="KW-0132">Cell division</keyword>
<keyword id="KW-0158">Chromosome</keyword>
<keyword id="KW-0498">Mitosis</keyword>
<keyword id="KW-0539">Nucleus</keyword>
<keyword id="KW-0597">Phosphoprotein</keyword>
<keyword id="KW-1185">Reference proteome</keyword>
<dbReference type="EMBL" id="AF203478">
    <property type="protein sequence ID" value="AAF18985.1"/>
    <property type="molecule type" value="mRNA"/>
</dbReference>
<dbReference type="EMBL" id="AE014297">
    <property type="protein sequence ID" value="AAF54430.1"/>
    <property type="molecule type" value="Genomic_DNA"/>
</dbReference>
<dbReference type="EMBL" id="AY058684">
    <property type="protein sequence ID" value="AAL13913.1"/>
    <property type="molecule type" value="mRNA"/>
</dbReference>
<dbReference type="RefSeq" id="NP_524295.1">
    <property type="nucleotide sequence ID" value="NM_079571.2"/>
</dbReference>
<dbReference type="BioGRID" id="66339">
    <property type="interactions" value="16"/>
</dbReference>
<dbReference type="FunCoup" id="Q9VH89">
    <property type="interactions" value="42"/>
</dbReference>
<dbReference type="IntAct" id="Q9VH89">
    <property type="interactions" value="8"/>
</dbReference>
<dbReference type="STRING" id="7227.FBpp0081564"/>
<dbReference type="GlyGen" id="Q9VH89">
    <property type="glycosylation" value="1 site"/>
</dbReference>
<dbReference type="iPTMnet" id="Q9VH89"/>
<dbReference type="PaxDb" id="7227-FBpp0081564"/>
<dbReference type="DNASU" id="41180"/>
<dbReference type="EnsemblMetazoa" id="FBtr0082086">
    <property type="protein sequence ID" value="FBpp0081564"/>
    <property type="gene ID" value="FBgn0278604"/>
</dbReference>
<dbReference type="GeneID" id="41180"/>
<dbReference type="KEGG" id="dme:Dmel_CG8374"/>
<dbReference type="UCSC" id="CG8374-RA">
    <property type="organism name" value="d. melanogaster"/>
</dbReference>
<dbReference type="AGR" id="FB:FBgn0278604"/>
<dbReference type="CTD" id="41180"/>
<dbReference type="FlyBase" id="FBgn0278604">
    <property type="gene designation" value="dmt"/>
</dbReference>
<dbReference type="VEuPathDB" id="VectorBase:FBgn0278604"/>
<dbReference type="eggNOG" id="ENOG502TJUP">
    <property type="taxonomic scope" value="Eukaryota"/>
</dbReference>
<dbReference type="HOGENOM" id="CLU_021996_0_0_1"/>
<dbReference type="InParanoid" id="Q9VH89"/>
<dbReference type="OMA" id="NSTMYVP"/>
<dbReference type="OrthoDB" id="8028148at2759"/>
<dbReference type="PhylomeDB" id="Q9VH89"/>
<dbReference type="SignaLink" id="Q9VH89"/>
<dbReference type="BioGRID-ORCS" id="41180">
    <property type="hits" value="1 hit in 1 CRISPR screen"/>
</dbReference>
<dbReference type="GenomeRNAi" id="41180"/>
<dbReference type="PRO" id="PR:Q9VH89"/>
<dbReference type="Proteomes" id="UP000000803">
    <property type="component" value="Chromosome 3R"/>
</dbReference>
<dbReference type="Bgee" id="FBgn0278604">
    <property type="expression patterns" value="Expressed in adult tracheocyte (Drosophila) in open tracheal system trachea and 121 other cell types or tissues"/>
</dbReference>
<dbReference type="GO" id="GO:0000785">
    <property type="term" value="C:chromatin"/>
    <property type="evidence" value="ECO:0000314"/>
    <property type="project" value="FlyBase"/>
</dbReference>
<dbReference type="GO" id="GO:0000792">
    <property type="term" value="C:heterochromatin"/>
    <property type="evidence" value="ECO:0000314"/>
    <property type="project" value="FlyBase"/>
</dbReference>
<dbReference type="GO" id="GO:0005634">
    <property type="term" value="C:nucleus"/>
    <property type="evidence" value="ECO:0007669"/>
    <property type="project" value="UniProtKB-SubCell"/>
</dbReference>
<dbReference type="GO" id="GO:0051301">
    <property type="term" value="P:cell division"/>
    <property type="evidence" value="ECO:0007669"/>
    <property type="project" value="UniProtKB-KW"/>
</dbReference>
<dbReference type="GO" id="GO:0071478">
    <property type="term" value="P:cellular response to radiation"/>
    <property type="evidence" value="ECO:0000315"/>
    <property type="project" value="FlyBase"/>
</dbReference>
<dbReference type="GO" id="GO:0007064">
    <property type="term" value="P:mitotic sister chromatid cohesion"/>
    <property type="evidence" value="ECO:0000315"/>
    <property type="project" value="UniProtKB"/>
</dbReference>
<dbReference type="GO" id="GO:0043066">
    <property type="term" value="P:negative regulation of apoptotic process"/>
    <property type="evidence" value="ECO:0000315"/>
    <property type="project" value="FlyBase"/>
</dbReference>
<dbReference type="GO" id="GO:0007422">
    <property type="term" value="P:peripheral nervous system development"/>
    <property type="evidence" value="ECO:0000304"/>
    <property type="project" value="FlyBase"/>
</dbReference>
<dbReference type="GO" id="GO:0007428">
    <property type="term" value="P:primary branching, open tracheal system"/>
    <property type="evidence" value="ECO:0000315"/>
    <property type="project" value="FlyBase"/>
</dbReference>
<dbReference type="GO" id="GO:0007431">
    <property type="term" value="P:salivary gland development"/>
    <property type="evidence" value="ECO:0000315"/>
    <property type="project" value="FlyBase"/>
</dbReference>
<dbReference type="GO" id="GO:0060438">
    <property type="term" value="P:trachea development"/>
    <property type="evidence" value="ECO:0000315"/>
    <property type="project" value="FlyBase"/>
</dbReference>
<dbReference type="Pfam" id="PF09666">
    <property type="entry name" value="Sororin_middle"/>
    <property type="match status" value="2"/>
</dbReference>
<proteinExistence type="evidence at protein level"/>
<protein>
    <recommendedName>
        <fullName>Protein dalmatian</fullName>
    </recommendedName>
    <alternativeName>
        <fullName>Sororin ortholog</fullName>
    </alternativeName>
</protein>
<sequence>MVRTRPVPCVPSPDVNTATRRNPGRPKKQSIGADLSTTISKPGRPKKLSIGADLTTIRKPGRPKKLGADLTTIIRKPGRPTKLSNKQSLTALNEPECRIRKCVVKIRRIKVKNGVVSEISRNDAPDVDASTFEPARNSTMYIPSKVQKSTQPQNIKENVAGPETSPCQQRIRSKSPSGPAAEISPKKPPRFFHRDQPLTRTRSSVTRNVFDFLSQSQIEDDSDREDPAADIIQRLVKDGKACVMVRSRKIGKPRAKRTAKKVRPVGNRRKVSTKDNEPEPVKVVPKSIEPRLQKPSRSLSTIFEPEEDYSNDSEHGYVQPIEVPVQVHVEPSTSKQAHEGAYSNLARSVMLNQTQAQNPLPSTDRRRELINMARQLVSTPLNRRAPPVTDVSATTTALSPIAHQSPNAVRTAGGKSPWRVSDDSPLPNTFMFGFNNSQMPSYSSDHVQRRHVYVPDSPVEHAENIPHEESICPPLHEQNHDSNANDSNEENRPPPTISKSMSINDQESEENAENFVHLPNPRRTLQKRTPFKDINILEVVTLPSWKKNVTATVSKEITPTRVAPRPMATSSPAQRSQTRSNLFGFDDDFACEDIPRKSTTPSKGIAPTSMSLNREVTPALANRNQTEVNTFGCNEILPCENIPKEKETNTEERTSSSQNLFGFDEFITESQDSPANFTGLSQNVNLHDKLHRLAELRPRDGELPQVSYTSIRSDCLGESHSKQTDIRYMLCSTMIAPPRPAKRKPAAPTARESMGLFRVDQDEPEQSFADKQPRRTYVKERPQRKRKKRVQILYIESESEDEDEQDSHDKSLDSPEKKRHHVKRPRRDIEHEAKLEQFVTSFNKQCEEVEKFPVIIE</sequence>
<organism>
    <name type="scientific">Drosophila melanogaster</name>
    <name type="common">Fruit fly</name>
    <dbReference type="NCBI Taxonomy" id="7227"/>
    <lineage>
        <taxon>Eukaryota</taxon>
        <taxon>Metazoa</taxon>
        <taxon>Ecdysozoa</taxon>
        <taxon>Arthropoda</taxon>
        <taxon>Hexapoda</taxon>
        <taxon>Insecta</taxon>
        <taxon>Pterygota</taxon>
        <taxon>Neoptera</taxon>
        <taxon>Endopterygota</taxon>
        <taxon>Diptera</taxon>
        <taxon>Brachycera</taxon>
        <taxon>Muscomorpha</taxon>
        <taxon>Ephydroidea</taxon>
        <taxon>Drosophilidae</taxon>
        <taxon>Drosophila</taxon>
        <taxon>Sophophora</taxon>
    </lineage>
</organism>
<reference key="1">
    <citation type="journal article" date="2000" name="Genetics">
        <title>Mutations affecting the development of the peripheral nervous system in Drosophila: a molecular screen for novel proteins.</title>
        <authorList>
            <person name="Prokopenko S.N."/>
            <person name="He Y."/>
            <person name="Lu Y."/>
            <person name="Bellen H.J."/>
        </authorList>
    </citation>
    <scope>NUCLEOTIDE SEQUENCE [MRNA]</scope>
    <scope>FUNCTION</scope>
    <scope>DEVELOPMENTAL STAGE</scope>
</reference>
<reference key="2">
    <citation type="journal article" date="2000" name="Science">
        <title>The genome sequence of Drosophila melanogaster.</title>
        <authorList>
            <person name="Adams M.D."/>
            <person name="Celniker S.E."/>
            <person name="Holt R.A."/>
            <person name="Evans C.A."/>
            <person name="Gocayne J.D."/>
            <person name="Amanatides P.G."/>
            <person name="Scherer S.E."/>
            <person name="Li P.W."/>
            <person name="Hoskins R.A."/>
            <person name="Galle R.F."/>
            <person name="George R.A."/>
            <person name="Lewis S.E."/>
            <person name="Richards S."/>
            <person name="Ashburner M."/>
            <person name="Henderson S.N."/>
            <person name="Sutton G.G."/>
            <person name="Wortman J.R."/>
            <person name="Yandell M.D."/>
            <person name="Zhang Q."/>
            <person name="Chen L.X."/>
            <person name="Brandon R.C."/>
            <person name="Rogers Y.-H.C."/>
            <person name="Blazej R.G."/>
            <person name="Champe M."/>
            <person name="Pfeiffer B.D."/>
            <person name="Wan K.H."/>
            <person name="Doyle C."/>
            <person name="Baxter E.G."/>
            <person name="Helt G."/>
            <person name="Nelson C.R."/>
            <person name="Miklos G.L.G."/>
            <person name="Abril J.F."/>
            <person name="Agbayani A."/>
            <person name="An H.-J."/>
            <person name="Andrews-Pfannkoch C."/>
            <person name="Baldwin D."/>
            <person name="Ballew R.M."/>
            <person name="Basu A."/>
            <person name="Baxendale J."/>
            <person name="Bayraktaroglu L."/>
            <person name="Beasley E.M."/>
            <person name="Beeson K.Y."/>
            <person name="Benos P.V."/>
            <person name="Berman B.P."/>
            <person name="Bhandari D."/>
            <person name="Bolshakov S."/>
            <person name="Borkova D."/>
            <person name="Botchan M.R."/>
            <person name="Bouck J."/>
            <person name="Brokstein P."/>
            <person name="Brottier P."/>
            <person name="Burtis K.C."/>
            <person name="Busam D.A."/>
            <person name="Butler H."/>
            <person name="Cadieu E."/>
            <person name="Center A."/>
            <person name="Chandra I."/>
            <person name="Cherry J.M."/>
            <person name="Cawley S."/>
            <person name="Dahlke C."/>
            <person name="Davenport L.B."/>
            <person name="Davies P."/>
            <person name="de Pablos B."/>
            <person name="Delcher A."/>
            <person name="Deng Z."/>
            <person name="Mays A.D."/>
            <person name="Dew I."/>
            <person name="Dietz S.M."/>
            <person name="Dodson K."/>
            <person name="Doup L.E."/>
            <person name="Downes M."/>
            <person name="Dugan-Rocha S."/>
            <person name="Dunkov B.C."/>
            <person name="Dunn P."/>
            <person name="Durbin K.J."/>
            <person name="Evangelista C.C."/>
            <person name="Ferraz C."/>
            <person name="Ferriera S."/>
            <person name="Fleischmann W."/>
            <person name="Fosler C."/>
            <person name="Gabrielian A.E."/>
            <person name="Garg N.S."/>
            <person name="Gelbart W.M."/>
            <person name="Glasser K."/>
            <person name="Glodek A."/>
            <person name="Gong F."/>
            <person name="Gorrell J.H."/>
            <person name="Gu Z."/>
            <person name="Guan P."/>
            <person name="Harris M."/>
            <person name="Harris N.L."/>
            <person name="Harvey D.A."/>
            <person name="Heiman T.J."/>
            <person name="Hernandez J.R."/>
            <person name="Houck J."/>
            <person name="Hostin D."/>
            <person name="Houston K.A."/>
            <person name="Howland T.J."/>
            <person name="Wei M.-H."/>
            <person name="Ibegwam C."/>
            <person name="Jalali M."/>
            <person name="Kalush F."/>
            <person name="Karpen G.H."/>
            <person name="Ke Z."/>
            <person name="Kennison J.A."/>
            <person name="Ketchum K.A."/>
            <person name="Kimmel B.E."/>
            <person name="Kodira C.D."/>
            <person name="Kraft C.L."/>
            <person name="Kravitz S."/>
            <person name="Kulp D."/>
            <person name="Lai Z."/>
            <person name="Lasko P."/>
            <person name="Lei Y."/>
            <person name="Levitsky A.A."/>
            <person name="Li J.H."/>
            <person name="Li Z."/>
            <person name="Liang Y."/>
            <person name="Lin X."/>
            <person name="Liu X."/>
            <person name="Mattei B."/>
            <person name="McIntosh T.C."/>
            <person name="McLeod M.P."/>
            <person name="McPherson D."/>
            <person name="Merkulov G."/>
            <person name="Milshina N.V."/>
            <person name="Mobarry C."/>
            <person name="Morris J."/>
            <person name="Moshrefi A."/>
            <person name="Mount S.M."/>
            <person name="Moy M."/>
            <person name="Murphy B."/>
            <person name="Murphy L."/>
            <person name="Muzny D.M."/>
            <person name="Nelson D.L."/>
            <person name="Nelson D.R."/>
            <person name="Nelson K.A."/>
            <person name="Nixon K."/>
            <person name="Nusskern D.R."/>
            <person name="Pacleb J.M."/>
            <person name="Palazzolo M."/>
            <person name="Pittman G.S."/>
            <person name="Pan S."/>
            <person name="Pollard J."/>
            <person name="Puri V."/>
            <person name="Reese M.G."/>
            <person name="Reinert K."/>
            <person name="Remington K."/>
            <person name="Saunders R.D.C."/>
            <person name="Scheeler F."/>
            <person name="Shen H."/>
            <person name="Shue B.C."/>
            <person name="Siden-Kiamos I."/>
            <person name="Simpson M."/>
            <person name="Skupski M.P."/>
            <person name="Smith T.J."/>
            <person name="Spier E."/>
            <person name="Spradling A.C."/>
            <person name="Stapleton M."/>
            <person name="Strong R."/>
            <person name="Sun E."/>
            <person name="Svirskas R."/>
            <person name="Tector C."/>
            <person name="Turner R."/>
            <person name="Venter E."/>
            <person name="Wang A.H."/>
            <person name="Wang X."/>
            <person name="Wang Z.-Y."/>
            <person name="Wassarman D.A."/>
            <person name="Weinstock G.M."/>
            <person name="Weissenbach J."/>
            <person name="Williams S.M."/>
            <person name="Woodage T."/>
            <person name="Worley K.C."/>
            <person name="Wu D."/>
            <person name="Yang S."/>
            <person name="Yao Q.A."/>
            <person name="Ye J."/>
            <person name="Yeh R.-F."/>
            <person name="Zaveri J.S."/>
            <person name="Zhan M."/>
            <person name="Zhang G."/>
            <person name="Zhao Q."/>
            <person name="Zheng L."/>
            <person name="Zheng X.H."/>
            <person name="Zhong F.N."/>
            <person name="Zhong W."/>
            <person name="Zhou X."/>
            <person name="Zhu S.C."/>
            <person name="Zhu X."/>
            <person name="Smith H.O."/>
            <person name="Gibbs R.A."/>
            <person name="Myers E.W."/>
            <person name="Rubin G.M."/>
            <person name="Venter J.C."/>
        </authorList>
    </citation>
    <scope>NUCLEOTIDE SEQUENCE [LARGE SCALE GENOMIC DNA]</scope>
    <source>
        <strain>Berkeley</strain>
    </source>
</reference>
<reference key="3">
    <citation type="journal article" date="2002" name="Genome Biol.">
        <title>Annotation of the Drosophila melanogaster euchromatic genome: a systematic review.</title>
        <authorList>
            <person name="Misra S."/>
            <person name="Crosby M.A."/>
            <person name="Mungall C.J."/>
            <person name="Matthews B.B."/>
            <person name="Campbell K.S."/>
            <person name="Hradecky P."/>
            <person name="Huang Y."/>
            <person name="Kaminker J.S."/>
            <person name="Millburn G.H."/>
            <person name="Prochnik S.E."/>
            <person name="Smith C.D."/>
            <person name="Tupy J.L."/>
            <person name="Whitfield E.J."/>
            <person name="Bayraktaroglu L."/>
            <person name="Berman B.P."/>
            <person name="Bettencourt B.R."/>
            <person name="Celniker S.E."/>
            <person name="de Grey A.D.N.J."/>
            <person name="Drysdale R.A."/>
            <person name="Harris N.L."/>
            <person name="Richter J."/>
            <person name="Russo S."/>
            <person name="Schroeder A.J."/>
            <person name="Shu S.Q."/>
            <person name="Stapleton M."/>
            <person name="Yamada C."/>
            <person name="Ashburner M."/>
            <person name="Gelbart W.M."/>
            <person name="Rubin G.M."/>
            <person name="Lewis S.E."/>
        </authorList>
    </citation>
    <scope>GENOME REANNOTATION</scope>
    <source>
        <strain>Berkeley</strain>
    </source>
</reference>
<reference key="4">
    <citation type="journal article" date="2002" name="Genome Biol.">
        <title>A Drosophila full-length cDNA resource.</title>
        <authorList>
            <person name="Stapleton M."/>
            <person name="Carlson J.W."/>
            <person name="Brokstein P."/>
            <person name="Yu C."/>
            <person name="Champe M."/>
            <person name="George R.A."/>
            <person name="Guarin H."/>
            <person name="Kronmiller B."/>
            <person name="Pacleb J.M."/>
            <person name="Park S."/>
            <person name="Wan K.H."/>
            <person name="Rubin G.M."/>
            <person name="Celniker S.E."/>
        </authorList>
    </citation>
    <scope>NUCLEOTIDE SEQUENCE [LARGE SCALE MRNA]</scope>
    <source>
        <strain>Berkeley</strain>
        <tissue>Embryo</tissue>
    </source>
</reference>
<reference key="5">
    <citation type="journal article" date="2008" name="J. Proteome Res.">
        <title>Phosphoproteome analysis of Drosophila melanogaster embryos.</title>
        <authorList>
            <person name="Zhai B."/>
            <person name="Villen J."/>
            <person name="Beausoleil S.A."/>
            <person name="Mintseris J."/>
            <person name="Gygi S.P."/>
        </authorList>
    </citation>
    <scope>PHOSPHORYLATION [LARGE SCALE ANALYSIS] AT SER-173; SER-175; SER-184; SER-222 AND SER-405</scope>
    <scope>IDENTIFICATION BY MASS SPECTROMETRY</scope>
</reference>
<reference key="6">
    <citation type="journal article" date="2010" name="Cell">
        <title>Sororin mediates sister chromatid cohesion by antagonizing wapl.</title>
        <authorList>
            <person name="Nishiyama T."/>
            <person name="Ladurner R."/>
            <person name="Schmitz J."/>
            <person name="Kreidl E."/>
            <person name="Schleiffer A."/>
            <person name="Bhaskara V."/>
            <person name="Bando M."/>
            <person name="Shirahige K."/>
            <person name="Hyman A.A."/>
            <person name="Mechtler K."/>
            <person name="Peters J.M."/>
        </authorList>
    </citation>
    <scope>FUNCTION</scope>
</reference>